<accession>Q56460</accession>
<accession>Q56456</accession>
<dbReference type="EMBL" id="L36951">
    <property type="protein sequence ID" value="AAA85383.1"/>
    <property type="molecule type" value="mRNA"/>
</dbReference>
<dbReference type="EMBL" id="L08575">
    <property type="protein sequence ID" value="AAA72336.1"/>
    <property type="molecule type" value="Genomic_DNA"/>
</dbReference>
<dbReference type="PIR" id="B36934">
    <property type="entry name" value="B36934"/>
</dbReference>
<dbReference type="RefSeq" id="WP_036750432.1">
    <property type="nucleotide sequence ID" value="NZ_QUMX01000042.1"/>
</dbReference>
<dbReference type="eggNOG" id="COG2259">
    <property type="taxonomic scope" value="Bacteria"/>
</dbReference>
<dbReference type="OrthoDB" id="4462029at2"/>
<dbReference type="UniPathway" id="UPA00895"/>
<dbReference type="GO" id="GO:0005886">
    <property type="term" value="C:plasma membrane"/>
    <property type="evidence" value="ECO:0007669"/>
    <property type="project" value="UniProtKB-SubCell"/>
</dbReference>
<dbReference type="GO" id="GO:0030416">
    <property type="term" value="P:methylamine metabolic process"/>
    <property type="evidence" value="ECO:0007669"/>
    <property type="project" value="InterPro"/>
</dbReference>
<dbReference type="InterPro" id="IPR009908">
    <property type="entry name" value="Methylamine_util_MauE"/>
</dbReference>
<dbReference type="Pfam" id="PF07291">
    <property type="entry name" value="MauE"/>
    <property type="match status" value="1"/>
</dbReference>
<protein>
    <recommendedName>
        <fullName>Methylamine utilization protein MauE</fullName>
    </recommendedName>
</protein>
<name>MAUE_PARVE</name>
<proteinExistence type="evidence at transcript level"/>
<organism>
    <name type="scientific">Paracoccus versutus</name>
    <name type="common">Thiobacillus versutus</name>
    <dbReference type="NCBI Taxonomy" id="34007"/>
    <lineage>
        <taxon>Bacteria</taxon>
        <taxon>Pseudomonadati</taxon>
        <taxon>Pseudomonadota</taxon>
        <taxon>Alphaproteobacteria</taxon>
        <taxon>Rhodobacterales</taxon>
        <taxon>Paracoccaceae</taxon>
        <taxon>Paracoccus</taxon>
    </lineage>
</organism>
<gene>
    <name type="primary">mauE</name>
    <name type="synonym">madE</name>
</gene>
<keyword id="KW-1003">Cell membrane</keyword>
<keyword id="KW-0472">Membrane</keyword>
<keyword id="KW-0812">Transmembrane</keyword>
<keyword id="KW-1133">Transmembrane helix</keyword>
<reference key="1">
    <citation type="submission" date="1996-01" db="EMBL/GenBank/DDBJ databases">
        <authorList>
            <person name="Huitema F."/>
            <person name="Duine J.A."/>
            <person name="Canters G.W."/>
        </authorList>
    </citation>
    <scope>NUCLEOTIDE SEQUENCE [GENOMIC DNA]</scope>
</reference>
<reference key="2">
    <citation type="journal article" date="1993" name="J. Bacteriol.">
        <title>Cloning and sequencing of the gene coding for the large subunit of methylamine dehydrogenase from Thiobacillus versutus.</title>
        <authorList>
            <person name="Huitema F."/>
            <person name="van Beeumen J."/>
            <person name="van Driessche G."/>
            <person name="Duine J.A."/>
            <person name="Canters G.W."/>
        </authorList>
    </citation>
    <scope>NUCLEOTIDE SEQUENCE [GENOMIC DNA] OF 1-25</scope>
</reference>
<feature type="chain" id="PRO_0000208936" description="Methylamine utilization protein MauE">
    <location>
        <begin position="1"/>
        <end position="186"/>
    </location>
</feature>
<feature type="transmembrane region" description="Helical" evidence="1">
    <location>
        <begin position="8"/>
        <end position="28"/>
    </location>
</feature>
<feature type="transmembrane region" description="Helical" evidence="1">
    <location>
        <begin position="54"/>
        <end position="74"/>
    </location>
</feature>
<feature type="transmembrane region" description="Helical" evidence="1">
    <location>
        <begin position="75"/>
        <end position="95"/>
    </location>
</feature>
<feature type="transmembrane region" description="Helical" evidence="1">
    <location>
        <begin position="119"/>
        <end position="139"/>
    </location>
</feature>
<feature type="transmembrane region" description="Helical" evidence="1">
    <location>
        <begin position="153"/>
        <end position="173"/>
    </location>
</feature>
<comment type="function">
    <text>May be specifically involved in the processing, transport, and/or maturation of the MADH beta-subunit.</text>
</comment>
<comment type="pathway">
    <text>One-carbon metabolism; methylamine degradation.</text>
</comment>
<comment type="subcellular location">
    <subcellularLocation>
        <location evidence="2">Cell membrane</location>
        <topology evidence="2">Multi-pass membrane protein</topology>
    </subcellularLocation>
</comment>
<sequence length="186" mass="19235">MQQVLQEPLIHWALRSFLAALFATAALSKLTGMEEFHGVVRNFRLLPDMASRAVAMVLPVAELAVAAGLMIPALAAPAALAAAALLGVFGLAIAVNVLRGRTQIDCGCFRNGMKQRISWAMVARNAVLTAMALGAAALLPAARPGGTADLATGMLAGSVLFLLYFSASMLGGLPARHPSTASVKGR</sequence>
<evidence type="ECO:0000255" key="1"/>
<evidence type="ECO:0000305" key="2"/>